<keyword id="KW-0687">Ribonucleoprotein</keyword>
<keyword id="KW-0689">Ribosomal protein</keyword>
<keyword id="KW-0694">RNA-binding</keyword>
<keyword id="KW-0699">rRNA-binding</keyword>
<protein>
    <recommendedName>
        <fullName evidence="1">Small ribosomal subunit protein bS20</fullName>
    </recommendedName>
    <alternativeName>
        <fullName evidence="2">30S ribosomal protein S20</fullName>
    </alternativeName>
</protein>
<dbReference type="EMBL" id="AP008231">
    <property type="protein sequence ID" value="BAD80695.1"/>
    <property type="molecule type" value="Genomic_DNA"/>
</dbReference>
<dbReference type="RefSeq" id="WP_011244815.1">
    <property type="nucleotide sequence ID" value="NZ_CP085785.1"/>
</dbReference>
<dbReference type="SMR" id="Q5MZ25"/>
<dbReference type="GeneID" id="72430445"/>
<dbReference type="KEGG" id="syc:syc2505_d"/>
<dbReference type="eggNOG" id="COG0268">
    <property type="taxonomic scope" value="Bacteria"/>
</dbReference>
<dbReference type="Proteomes" id="UP000001175">
    <property type="component" value="Chromosome"/>
</dbReference>
<dbReference type="GO" id="GO:0005829">
    <property type="term" value="C:cytosol"/>
    <property type="evidence" value="ECO:0007669"/>
    <property type="project" value="TreeGrafter"/>
</dbReference>
<dbReference type="GO" id="GO:0015935">
    <property type="term" value="C:small ribosomal subunit"/>
    <property type="evidence" value="ECO:0007669"/>
    <property type="project" value="TreeGrafter"/>
</dbReference>
<dbReference type="GO" id="GO:0070181">
    <property type="term" value="F:small ribosomal subunit rRNA binding"/>
    <property type="evidence" value="ECO:0007669"/>
    <property type="project" value="TreeGrafter"/>
</dbReference>
<dbReference type="GO" id="GO:0003735">
    <property type="term" value="F:structural constituent of ribosome"/>
    <property type="evidence" value="ECO:0007669"/>
    <property type="project" value="InterPro"/>
</dbReference>
<dbReference type="GO" id="GO:0006412">
    <property type="term" value="P:translation"/>
    <property type="evidence" value="ECO:0007669"/>
    <property type="project" value="UniProtKB-UniRule"/>
</dbReference>
<dbReference type="FunFam" id="1.20.58.110:FF:000001">
    <property type="entry name" value="30S ribosomal protein S20"/>
    <property type="match status" value="1"/>
</dbReference>
<dbReference type="Gene3D" id="1.20.58.110">
    <property type="entry name" value="Ribosomal protein S20"/>
    <property type="match status" value="1"/>
</dbReference>
<dbReference type="HAMAP" id="MF_00500">
    <property type="entry name" value="Ribosomal_bS20"/>
    <property type="match status" value="1"/>
</dbReference>
<dbReference type="InterPro" id="IPR002583">
    <property type="entry name" value="Ribosomal_bS20"/>
</dbReference>
<dbReference type="InterPro" id="IPR036510">
    <property type="entry name" value="Ribosomal_bS20_sf"/>
</dbReference>
<dbReference type="NCBIfam" id="TIGR00029">
    <property type="entry name" value="S20"/>
    <property type="match status" value="1"/>
</dbReference>
<dbReference type="PANTHER" id="PTHR33398">
    <property type="entry name" value="30S RIBOSOMAL PROTEIN S20"/>
    <property type="match status" value="1"/>
</dbReference>
<dbReference type="PANTHER" id="PTHR33398:SF1">
    <property type="entry name" value="SMALL RIBOSOMAL SUBUNIT PROTEIN BS20C"/>
    <property type="match status" value="1"/>
</dbReference>
<dbReference type="Pfam" id="PF01649">
    <property type="entry name" value="Ribosomal_S20p"/>
    <property type="match status" value="1"/>
</dbReference>
<dbReference type="SUPFAM" id="SSF46992">
    <property type="entry name" value="Ribosomal protein S20"/>
    <property type="match status" value="1"/>
</dbReference>
<proteinExistence type="inferred from homology"/>
<sequence>MANIKSAIKRVQIAERNRLRNKAYKSAVKTLVKHCFTAFDAYAADPNETARQAVNERLSAAYSKIDKAVKRGVLHANTGARKKARLAKAFHLKVDPQA</sequence>
<accession>Q5MZ25</accession>
<organism>
    <name type="scientific">Synechococcus sp. (strain ATCC 27144 / PCC 6301 / SAUG 1402/1)</name>
    <name type="common">Anacystis nidulans</name>
    <dbReference type="NCBI Taxonomy" id="269084"/>
    <lineage>
        <taxon>Bacteria</taxon>
        <taxon>Bacillati</taxon>
        <taxon>Cyanobacteriota</taxon>
        <taxon>Cyanophyceae</taxon>
        <taxon>Synechococcales</taxon>
        <taxon>Synechococcaceae</taxon>
        <taxon>Synechococcus</taxon>
    </lineage>
</organism>
<gene>
    <name evidence="1" type="primary">rpsT</name>
    <name evidence="1" type="synonym">rps20</name>
    <name type="ordered locus">syc2505_d</name>
</gene>
<feature type="chain" id="PRO_0000168045" description="Small ribosomal subunit protein bS20">
    <location>
        <begin position="1"/>
        <end position="98"/>
    </location>
</feature>
<evidence type="ECO:0000255" key="1">
    <source>
        <dbReference type="HAMAP-Rule" id="MF_00500"/>
    </source>
</evidence>
<evidence type="ECO:0000305" key="2"/>
<comment type="function">
    <text evidence="1">Binds directly to 16S ribosomal RNA.</text>
</comment>
<comment type="similarity">
    <text evidence="1">Belongs to the bacterial ribosomal protein bS20 family.</text>
</comment>
<reference key="1">
    <citation type="journal article" date="2007" name="Photosyn. Res.">
        <title>Complete nucleotide sequence of the freshwater unicellular cyanobacterium Synechococcus elongatus PCC 6301 chromosome: gene content and organization.</title>
        <authorList>
            <person name="Sugita C."/>
            <person name="Ogata K."/>
            <person name="Shikata M."/>
            <person name="Jikuya H."/>
            <person name="Takano J."/>
            <person name="Furumichi M."/>
            <person name="Kanehisa M."/>
            <person name="Omata T."/>
            <person name="Sugiura M."/>
            <person name="Sugita M."/>
        </authorList>
    </citation>
    <scope>NUCLEOTIDE SEQUENCE [LARGE SCALE GENOMIC DNA]</scope>
    <source>
        <strain>ATCC 27144 / PCC 6301 / SAUG 1402/1</strain>
    </source>
</reference>
<name>RS20_SYNP6</name>